<name>SPEH_PARMW</name>
<accession>Q7U4L7</accession>
<organism>
    <name type="scientific">Parasynechococcus marenigrum (strain WH8102)</name>
    <dbReference type="NCBI Taxonomy" id="84588"/>
    <lineage>
        <taxon>Bacteria</taxon>
        <taxon>Bacillati</taxon>
        <taxon>Cyanobacteriota</taxon>
        <taxon>Cyanophyceae</taxon>
        <taxon>Synechococcales</taxon>
        <taxon>Prochlorococcaceae</taxon>
        <taxon>Parasynechococcus</taxon>
        <taxon>Parasynechococcus marenigrum</taxon>
    </lineage>
</organism>
<gene>
    <name evidence="1" type="primary">speH</name>
    <name type="ordered locus">SYNW2050</name>
</gene>
<evidence type="ECO:0000255" key="1">
    <source>
        <dbReference type="HAMAP-Rule" id="MF_00464"/>
    </source>
</evidence>
<reference key="1">
    <citation type="journal article" date="2003" name="Nature">
        <title>The genome of a motile marine Synechococcus.</title>
        <authorList>
            <person name="Palenik B."/>
            <person name="Brahamsha B."/>
            <person name="Larimer F.W."/>
            <person name="Land M.L."/>
            <person name="Hauser L."/>
            <person name="Chain P."/>
            <person name="Lamerdin J.E."/>
            <person name="Regala W."/>
            <person name="Allen E.E."/>
            <person name="McCarren J."/>
            <person name="Paulsen I.T."/>
            <person name="Dufresne A."/>
            <person name="Partensky F."/>
            <person name="Webb E.A."/>
            <person name="Waterbury J."/>
        </authorList>
    </citation>
    <scope>NUCLEOTIDE SEQUENCE [LARGE SCALE GENOMIC DNA]</scope>
    <source>
        <strain>WH8102</strain>
    </source>
</reference>
<proteinExistence type="inferred from homology"/>
<comment type="function">
    <text evidence="1">Catalyzes the decarboxylation of S-adenosylmethionine to S-adenosylmethioninamine (dcAdoMet), the propylamine donor required for the synthesis of the polyamines spermine and spermidine from the diamine putrescine.</text>
</comment>
<comment type="catalytic activity">
    <reaction evidence="1">
        <text>S-adenosyl-L-methionine + H(+) = S-adenosyl 3-(methylsulfanyl)propylamine + CO2</text>
        <dbReference type="Rhea" id="RHEA:15981"/>
        <dbReference type="ChEBI" id="CHEBI:15378"/>
        <dbReference type="ChEBI" id="CHEBI:16526"/>
        <dbReference type="ChEBI" id="CHEBI:57443"/>
        <dbReference type="ChEBI" id="CHEBI:59789"/>
        <dbReference type="EC" id="4.1.1.50"/>
    </reaction>
</comment>
<comment type="cofactor">
    <cofactor evidence="1">
        <name>pyruvate</name>
        <dbReference type="ChEBI" id="CHEBI:15361"/>
    </cofactor>
    <text evidence="1">Binds 1 pyruvoyl group covalently per subunit.</text>
</comment>
<comment type="pathway">
    <text evidence="1">Amine and polyamine biosynthesis; S-adenosylmethioninamine biosynthesis; S-adenosylmethioninamine from S-adenosyl-L-methionine: step 1/1.</text>
</comment>
<comment type="subunit">
    <text evidence="1">Heterotetramer of two alpha and two beta chains arranged as a dimer of alpha/beta heterodimers.</text>
</comment>
<comment type="PTM">
    <text evidence="1">Is synthesized initially as an inactive proenzyme. Formation of the active enzyme involves a self-maturation process in which the active site pyruvoyl group is generated from an internal serine residue via an autocatalytic post-translational modification. Two non-identical subunits are generated from the proenzyme in this reaction, and the pyruvate is formed at the N-terminus of the alpha chain, which is derived from the carboxyl end of the proenzyme. The post-translation cleavage follows an unusual pathway, termed non-hydrolytic serinolysis, in which the side chain hydroxyl group of the serine supplies its oxygen atom to form the C-terminus of the beta chain, while the remainder of the serine residue undergoes an oxidative deamination to produce ammonia and the pyruvoyl group blocking the N-terminus of the alpha chain.</text>
</comment>
<comment type="similarity">
    <text evidence="1">Belongs to the prokaryotic AdoMetDC family. Type 1 subfamily.</text>
</comment>
<protein>
    <recommendedName>
        <fullName evidence="1">S-adenosylmethionine decarboxylase proenzyme</fullName>
        <shortName evidence="1">AdoMetDC</shortName>
        <shortName evidence="1">SAMDC</shortName>
        <ecNumber evidence="1">4.1.1.50</ecNumber>
    </recommendedName>
    <component>
        <recommendedName>
            <fullName evidence="1">S-adenosylmethionine decarboxylase beta chain</fullName>
        </recommendedName>
    </component>
    <component>
        <recommendedName>
            <fullName evidence="1">S-adenosylmethionine decarboxylase alpha chain</fullName>
        </recommendedName>
    </component>
</protein>
<dbReference type="EC" id="4.1.1.50" evidence="1"/>
<dbReference type="EMBL" id="BX569694">
    <property type="protein sequence ID" value="CAE08565.1"/>
    <property type="molecule type" value="Genomic_DNA"/>
</dbReference>
<dbReference type="SMR" id="Q7U4L7"/>
<dbReference type="STRING" id="84588.SYNW2050"/>
<dbReference type="KEGG" id="syw:SYNW2050"/>
<dbReference type="eggNOG" id="COG1586">
    <property type="taxonomic scope" value="Bacteria"/>
</dbReference>
<dbReference type="HOGENOM" id="CLU_125470_2_0_3"/>
<dbReference type="UniPathway" id="UPA00331">
    <property type="reaction ID" value="UER00451"/>
</dbReference>
<dbReference type="Proteomes" id="UP000001422">
    <property type="component" value="Chromosome"/>
</dbReference>
<dbReference type="GO" id="GO:0005829">
    <property type="term" value="C:cytosol"/>
    <property type="evidence" value="ECO:0007669"/>
    <property type="project" value="TreeGrafter"/>
</dbReference>
<dbReference type="GO" id="GO:0004014">
    <property type="term" value="F:adenosylmethionine decarboxylase activity"/>
    <property type="evidence" value="ECO:0007669"/>
    <property type="project" value="UniProtKB-UniRule"/>
</dbReference>
<dbReference type="GO" id="GO:0008295">
    <property type="term" value="P:spermidine biosynthetic process"/>
    <property type="evidence" value="ECO:0007669"/>
    <property type="project" value="UniProtKB-UniRule"/>
</dbReference>
<dbReference type="Gene3D" id="3.30.160.750">
    <property type="match status" value="1"/>
</dbReference>
<dbReference type="Gene3D" id="3.30.360.110">
    <property type="entry name" value="S-adenosylmethionine decarboxylase domain"/>
    <property type="match status" value="1"/>
</dbReference>
<dbReference type="HAMAP" id="MF_00464">
    <property type="entry name" value="AdoMetDC_1"/>
    <property type="match status" value="1"/>
</dbReference>
<dbReference type="InterPro" id="IPR042286">
    <property type="entry name" value="AdoMetDC_C"/>
</dbReference>
<dbReference type="InterPro" id="IPR003826">
    <property type="entry name" value="AdoMetDC_fam_prok"/>
</dbReference>
<dbReference type="InterPro" id="IPR042284">
    <property type="entry name" value="AdoMetDC_N"/>
</dbReference>
<dbReference type="InterPro" id="IPR016067">
    <property type="entry name" value="S-AdoMet_deCO2ase_core"/>
</dbReference>
<dbReference type="InterPro" id="IPR017716">
    <property type="entry name" value="S-AdoMet_deCOase_pro-enz"/>
</dbReference>
<dbReference type="NCBIfam" id="TIGR03330">
    <property type="entry name" value="SAM_DCase_Bsu"/>
    <property type="match status" value="1"/>
</dbReference>
<dbReference type="PANTHER" id="PTHR33866">
    <property type="entry name" value="S-ADENOSYLMETHIONINE DECARBOXYLASE PROENZYME"/>
    <property type="match status" value="1"/>
</dbReference>
<dbReference type="PANTHER" id="PTHR33866:SF2">
    <property type="entry name" value="S-ADENOSYLMETHIONINE DECARBOXYLASE PROENZYME"/>
    <property type="match status" value="1"/>
</dbReference>
<dbReference type="Pfam" id="PF02675">
    <property type="entry name" value="AdoMet_dc"/>
    <property type="match status" value="1"/>
</dbReference>
<dbReference type="SUPFAM" id="SSF56276">
    <property type="entry name" value="S-adenosylmethionine decarboxylase"/>
    <property type="match status" value="1"/>
</dbReference>
<sequence length="128" mass="14038">MVGKHCILELYDCDPARLDDEAFLRTTITTAAKRAGATLLNLITHSFEPQGVTGLALLAESHISIHTWPESGYAAVDVFTCGDHTMPEQACAVLRDELRAQRHALRSFRRETPAAVADTVREPIQLPG</sequence>
<keyword id="KW-0068">Autocatalytic cleavage</keyword>
<keyword id="KW-0210">Decarboxylase</keyword>
<keyword id="KW-0456">Lyase</keyword>
<keyword id="KW-0620">Polyamine biosynthesis</keyword>
<keyword id="KW-0670">Pyruvate</keyword>
<keyword id="KW-0949">S-adenosyl-L-methionine</keyword>
<keyword id="KW-0704">Schiff base</keyword>
<keyword id="KW-0745">Spermidine biosynthesis</keyword>
<keyword id="KW-0865">Zymogen</keyword>
<feature type="chain" id="PRO_0000030121" description="S-adenosylmethionine decarboxylase beta chain" evidence="1">
    <location>
        <begin position="1"/>
        <end position="60"/>
    </location>
</feature>
<feature type="chain" id="PRO_0000030122" description="S-adenosylmethionine decarboxylase alpha chain" evidence="1">
    <location>
        <begin position="61"/>
        <end position="128"/>
    </location>
</feature>
<feature type="active site" description="Schiff-base intermediate with substrate; via pyruvic acid" evidence="1">
    <location>
        <position position="61"/>
    </location>
</feature>
<feature type="active site" description="Proton acceptor; for processing activity" evidence="1">
    <location>
        <position position="66"/>
    </location>
</feature>
<feature type="active site" description="Proton donor; for catalytic activity" evidence="1">
    <location>
        <position position="81"/>
    </location>
</feature>
<feature type="site" description="Cleavage (non-hydrolytic); by autolysis" evidence="1">
    <location>
        <begin position="60"/>
        <end position="61"/>
    </location>
</feature>
<feature type="modified residue" description="Pyruvic acid (Ser); by autocatalysis" evidence="1">
    <location>
        <position position="61"/>
    </location>
</feature>